<keyword id="KW-1185">Reference proteome</keyword>
<proteinExistence type="inferred from homology"/>
<gene>
    <name evidence="1" type="primary">yraN</name>
    <name type="ordered locus">EcE24377A_3630</name>
</gene>
<evidence type="ECO:0000255" key="1">
    <source>
        <dbReference type="HAMAP-Rule" id="MF_00048"/>
    </source>
</evidence>
<evidence type="ECO:0000256" key="2">
    <source>
        <dbReference type="SAM" id="MobiDB-lite"/>
    </source>
</evidence>
<protein>
    <recommendedName>
        <fullName evidence="1">UPF0102 protein YraN</fullName>
    </recommendedName>
</protein>
<feature type="chain" id="PRO_1000057333" description="UPF0102 protein YraN">
    <location>
        <begin position="1"/>
        <end position="131"/>
    </location>
</feature>
<feature type="region of interest" description="Disordered" evidence="2">
    <location>
        <begin position="1"/>
        <end position="20"/>
    </location>
</feature>
<comment type="similarity">
    <text evidence="1">Belongs to the UPF0102 family.</text>
</comment>
<sequence>MATVPTRSGSPRQLTTKQTGDTWEVQARRWLEGKGLRFVAANVNERGGEIDLIMREGRTTVFVEVRYRRSALYGGAAASVTRSKQHKLLQTARLWLARHNGSFDTVDCRFDVVAFTGNEVEWIKDAFNDHS</sequence>
<accession>A7ZS44</accession>
<reference key="1">
    <citation type="journal article" date="2008" name="J. Bacteriol.">
        <title>The pangenome structure of Escherichia coli: comparative genomic analysis of E. coli commensal and pathogenic isolates.</title>
        <authorList>
            <person name="Rasko D.A."/>
            <person name="Rosovitz M.J."/>
            <person name="Myers G.S.A."/>
            <person name="Mongodin E.F."/>
            <person name="Fricke W.F."/>
            <person name="Gajer P."/>
            <person name="Crabtree J."/>
            <person name="Sebaihia M."/>
            <person name="Thomson N.R."/>
            <person name="Chaudhuri R."/>
            <person name="Henderson I.R."/>
            <person name="Sperandio V."/>
            <person name="Ravel J."/>
        </authorList>
    </citation>
    <scope>NUCLEOTIDE SEQUENCE [LARGE SCALE GENOMIC DNA]</scope>
    <source>
        <strain>E24377A / ETEC</strain>
    </source>
</reference>
<dbReference type="EMBL" id="CP000800">
    <property type="protein sequence ID" value="ABV17532.1"/>
    <property type="molecule type" value="Genomic_DNA"/>
</dbReference>
<dbReference type="RefSeq" id="WP_000246863.1">
    <property type="nucleotide sequence ID" value="NC_009801.1"/>
</dbReference>
<dbReference type="SMR" id="A7ZS44"/>
<dbReference type="KEGG" id="ecw:EcE24377A_3630"/>
<dbReference type="HOGENOM" id="CLU_115353_1_0_6"/>
<dbReference type="Proteomes" id="UP000001122">
    <property type="component" value="Chromosome"/>
</dbReference>
<dbReference type="GO" id="GO:0003676">
    <property type="term" value="F:nucleic acid binding"/>
    <property type="evidence" value="ECO:0007669"/>
    <property type="project" value="InterPro"/>
</dbReference>
<dbReference type="CDD" id="cd20736">
    <property type="entry name" value="PoNe_Nuclease"/>
    <property type="match status" value="1"/>
</dbReference>
<dbReference type="Gene3D" id="3.40.1350.10">
    <property type="match status" value="1"/>
</dbReference>
<dbReference type="HAMAP" id="MF_00048">
    <property type="entry name" value="UPF0102"/>
    <property type="match status" value="1"/>
</dbReference>
<dbReference type="InterPro" id="IPR011335">
    <property type="entry name" value="Restrct_endonuc-II-like"/>
</dbReference>
<dbReference type="InterPro" id="IPR011856">
    <property type="entry name" value="tRNA_endonuc-like_dom_sf"/>
</dbReference>
<dbReference type="InterPro" id="IPR003509">
    <property type="entry name" value="UPF0102_YraN-like"/>
</dbReference>
<dbReference type="NCBIfam" id="NF009150">
    <property type="entry name" value="PRK12497.1-3"/>
    <property type="match status" value="1"/>
</dbReference>
<dbReference type="NCBIfam" id="TIGR00252">
    <property type="entry name" value="YraN family protein"/>
    <property type="match status" value="1"/>
</dbReference>
<dbReference type="PANTHER" id="PTHR34039">
    <property type="entry name" value="UPF0102 PROTEIN YRAN"/>
    <property type="match status" value="1"/>
</dbReference>
<dbReference type="PANTHER" id="PTHR34039:SF1">
    <property type="entry name" value="UPF0102 PROTEIN YRAN"/>
    <property type="match status" value="1"/>
</dbReference>
<dbReference type="Pfam" id="PF02021">
    <property type="entry name" value="UPF0102"/>
    <property type="match status" value="1"/>
</dbReference>
<dbReference type="SUPFAM" id="SSF52980">
    <property type="entry name" value="Restriction endonuclease-like"/>
    <property type="match status" value="1"/>
</dbReference>
<organism>
    <name type="scientific">Escherichia coli O139:H28 (strain E24377A / ETEC)</name>
    <dbReference type="NCBI Taxonomy" id="331111"/>
    <lineage>
        <taxon>Bacteria</taxon>
        <taxon>Pseudomonadati</taxon>
        <taxon>Pseudomonadota</taxon>
        <taxon>Gammaproteobacteria</taxon>
        <taxon>Enterobacterales</taxon>
        <taxon>Enterobacteriaceae</taxon>
        <taxon>Escherichia</taxon>
    </lineage>
</organism>
<name>YRAN_ECO24</name>